<protein>
    <recommendedName>
        <fullName>Probable alpha-glucuronidase A</fullName>
        <ecNumber>3.2.1.139</ecNumber>
    </recommendedName>
    <alternativeName>
        <fullName>Alpha-glucosiduronase A</fullName>
    </alternativeName>
</protein>
<feature type="signal peptide" evidence="2">
    <location>
        <begin position="1"/>
        <end position="19"/>
    </location>
</feature>
<feature type="chain" id="PRO_0000393486" description="Probable alpha-glucuronidase A">
    <location>
        <begin position="20"/>
        <end position="840"/>
    </location>
</feature>
<feature type="glycosylation site" description="N-linked (GlcNAc...) asparagine" evidence="2">
    <location>
        <position position="50"/>
    </location>
</feature>
<feature type="glycosylation site" description="N-linked (GlcNAc...) asparagine" evidence="2">
    <location>
        <position position="149"/>
    </location>
</feature>
<feature type="glycosylation site" description="N-linked (GlcNAc...) asparagine" evidence="2">
    <location>
        <position position="222"/>
    </location>
</feature>
<feature type="glycosylation site" description="N-linked (GlcNAc...) asparagine" evidence="2">
    <location>
        <position position="262"/>
    </location>
</feature>
<feature type="glycosylation site" description="N-linked (GlcNAc...) asparagine" evidence="2">
    <location>
        <position position="279"/>
    </location>
</feature>
<feature type="glycosylation site" description="N-linked (GlcNAc...) asparagine" evidence="2">
    <location>
        <position position="310"/>
    </location>
</feature>
<feature type="glycosylation site" description="N-linked (GlcNAc...) asparagine" evidence="2">
    <location>
        <position position="465"/>
    </location>
</feature>
<feature type="glycosylation site" description="N-linked (GlcNAc...) asparagine" evidence="2">
    <location>
        <position position="527"/>
    </location>
</feature>
<feature type="glycosylation site" description="N-linked (GlcNAc...) asparagine" evidence="2">
    <location>
        <position position="576"/>
    </location>
</feature>
<feature type="glycosylation site" description="N-linked (GlcNAc...) asparagine" evidence="2">
    <location>
        <position position="610"/>
    </location>
</feature>
<feature type="glycosylation site" description="N-linked (GlcNAc...) asparagine" evidence="2">
    <location>
        <position position="682"/>
    </location>
</feature>
<feature type="glycosylation site" description="N-linked (GlcNAc...) asparagine" evidence="2">
    <location>
        <position position="723"/>
    </location>
</feature>
<feature type="glycosylation site" description="N-linked (GlcNAc...) asparagine" evidence="2">
    <location>
        <position position="732"/>
    </location>
</feature>
<organism>
    <name type="scientific">Aspergillus fumigatus (strain CBS 144.89 / FGSC A1163 / CEA10)</name>
    <name type="common">Neosartorya fumigata</name>
    <dbReference type="NCBI Taxonomy" id="451804"/>
    <lineage>
        <taxon>Eukaryota</taxon>
        <taxon>Fungi</taxon>
        <taxon>Dikarya</taxon>
        <taxon>Ascomycota</taxon>
        <taxon>Pezizomycotina</taxon>
        <taxon>Eurotiomycetes</taxon>
        <taxon>Eurotiomycetidae</taxon>
        <taxon>Eurotiales</taxon>
        <taxon>Aspergillaceae</taxon>
        <taxon>Aspergillus</taxon>
        <taxon>Aspergillus subgen. Fumigati</taxon>
    </lineage>
</organism>
<dbReference type="EC" id="3.2.1.139"/>
<dbReference type="EMBL" id="DS499597">
    <property type="protein sequence ID" value="EDP52172.1"/>
    <property type="molecule type" value="Genomic_DNA"/>
</dbReference>
<dbReference type="SMR" id="B0Y2K1"/>
<dbReference type="GlyCosmos" id="B0Y2K1">
    <property type="glycosylation" value="13 sites, No reported glycans"/>
</dbReference>
<dbReference type="EnsemblFungi" id="EDP52172">
    <property type="protein sequence ID" value="EDP52172"/>
    <property type="gene ID" value="AFUB_062100"/>
</dbReference>
<dbReference type="VEuPathDB" id="FungiDB:AFUB_062100"/>
<dbReference type="HOGENOM" id="CLU_007125_2_0_1"/>
<dbReference type="OrthoDB" id="18798at5052"/>
<dbReference type="PhylomeDB" id="B0Y2K1"/>
<dbReference type="Proteomes" id="UP000001699">
    <property type="component" value="Unassembled WGS sequence"/>
</dbReference>
<dbReference type="GO" id="GO:0005576">
    <property type="term" value="C:extracellular region"/>
    <property type="evidence" value="ECO:0007669"/>
    <property type="project" value="UniProtKB-SubCell"/>
</dbReference>
<dbReference type="GO" id="GO:0046559">
    <property type="term" value="F:alpha-glucuronidase activity"/>
    <property type="evidence" value="ECO:0007669"/>
    <property type="project" value="UniProtKB-EC"/>
</dbReference>
<dbReference type="GO" id="GO:0045493">
    <property type="term" value="P:xylan catabolic process"/>
    <property type="evidence" value="ECO:0007669"/>
    <property type="project" value="UniProtKB-KW"/>
</dbReference>
<dbReference type="CDD" id="cd02795">
    <property type="entry name" value="CBM6-CBM35-CBM36_like"/>
    <property type="match status" value="1"/>
</dbReference>
<dbReference type="FunFam" id="3.30.379.10:FF:000007">
    <property type="entry name" value="Alpha-glucuronidase A"/>
    <property type="match status" value="1"/>
</dbReference>
<dbReference type="FunFam" id="3.20.20.80:FF:000096">
    <property type="entry name" value="Xylan alpha-1,2-glucuronidase"/>
    <property type="match status" value="1"/>
</dbReference>
<dbReference type="FunFam" id="3.90.1330.10:FF:000001">
    <property type="entry name" value="Xylan alpha-1,2-glucuronidase"/>
    <property type="match status" value="1"/>
</dbReference>
<dbReference type="Gene3D" id="3.90.1330.10">
    <property type="entry name" value="Alpha-glucuronidase, C-terminal domain"/>
    <property type="match status" value="1"/>
</dbReference>
<dbReference type="Gene3D" id="3.30.379.10">
    <property type="entry name" value="Chitobiase/beta-hexosaminidase domain 2-like"/>
    <property type="match status" value="1"/>
</dbReference>
<dbReference type="Gene3D" id="3.20.20.80">
    <property type="entry name" value="Glycosidases"/>
    <property type="match status" value="1"/>
</dbReference>
<dbReference type="InterPro" id="IPR037054">
    <property type="entry name" value="A-glucoronidase_C_sf"/>
</dbReference>
<dbReference type="InterPro" id="IPR011395">
    <property type="entry name" value="Glyco_hydro_67_aGlcAse"/>
</dbReference>
<dbReference type="InterPro" id="IPR005154">
    <property type="entry name" value="Glyco_hydro_67_aGlcAse_N"/>
</dbReference>
<dbReference type="InterPro" id="IPR011099">
    <property type="entry name" value="Glyco_hydro_67_C"/>
</dbReference>
<dbReference type="InterPro" id="IPR011100">
    <property type="entry name" value="Glyco_hydro_67_cat"/>
</dbReference>
<dbReference type="InterPro" id="IPR017853">
    <property type="entry name" value="Glycoside_hydrolase_SF"/>
</dbReference>
<dbReference type="InterPro" id="IPR029018">
    <property type="entry name" value="Hex-like_dom2"/>
</dbReference>
<dbReference type="PANTHER" id="PTHR39207">
    <property type="entry name" value="ALPHA-GLUCURONIDASE A"/>
    <property type="match status" value="1"/>
</dbReference>
<dbReference type="PANTHER" id="PTHR39207:SF1">
    <property type="entry name" value="ALPHA-GLUCURONIDASE A"/>
    <property type="match status" value="1"/>
</dbReference>
<dbReference type="Pfam" id="PF07477">
    <property type="entry name" value="Glyco_hydro_67C"/>
    <property type="match status" value="1"/>
</dbReference>
<dbReference type="Pfam" id="PF07488">
    <property type="entry name" value="Glyco_hydro_67M"/>
    <property type="match status" value="1"/>
</dbReference>
<dbReference type="Pfam" id="PF03648">
    <property type="entry name" value="Glyco_hydro_67N"/>
    <property type="match status" value="1"/>
</dbReference>
<dbReference type="PIRSF" id="PIRSF029900">
    <property type="entry name" value="Alpha-glucuronds"/>
    <property type="match status" value="1"/>
</dbReference>
<dbReference type="SUPFAM" id="SSF51445">
    <property type="entry name" value="(Trans)glycosidases"/>
    <property type="match status" value="1"/>
</dbReference>
<dbReference type="SUPFAM" id="SSF55545">
    <property type="entry name" value="beta-N-acetylhexosaminidase-like domain"/>
    <property type="match status" value="1"/>
</dbReference>
<evidence type="ECO:0000250" key="1"/>
<evidence type="ECO:0000255" key="2"/>
<evidence type="ECO:0000305" key="3"/>
<gene>
    <name type="primary">aguA</name>
    <name type="ORF">AFUB_062100</name>
</gene>
<accession>B0Y2K1</accession>
<keyword id="KW-0119">Carbohydrate metabolism</keyword>
<keyword id="KW-0325">Glycoprotein</keyword>
<keyword id="KW-0326">Glycosidase</keyword>
<keyword id="KW-0378">Hydrolase</keyword>
<keyword id="KW-0624">Polysaccharide degradation</keyword>
<keyword id="KW-0964">Secreted</keyword>
<keyword id="KW-0732">Signal</keyword>
<keyword id="KW-0858">Xylan degradation</keyword>
<sequence>MWSGIPIFALLSSIGIAAAETGLDGWLRYASVPCNGNCQRALPSHIVTLNSTRSSPVYVAGQELQDGLHQILGKHASVKSTGCSTDSSIIVGTVEAYRQVCNAGRQVPQLDVDGFWLSIREKSVLIVGQSERGALYGAYEYLSMLAQGNFSQVSYATSPHAPIRWVNQWDNMDGSIERGYGGPSIFFKDGVIRQDLSRVQQYARLLASVRINGIIVNNVNANASLLMPSNMDGLARIADIFRPYGIRVGISLNFASPSTLGNLSTYDPFDSSVIAWWGNVTDQLYARIPDMAGYLVKANSEGQPGPTTYNRTLADGANMFARALKPYGGVVMFRAFVYDHHISEDNWYNDRANAAVDFFKPLDGKFDDNVVVQIKYGPIDFQVREPASPLFANLYKTNTAIELQVTQEYLGQQSHLVYLPPLWQTILGFDLRVDQKPSLVRDIISGQRFDRPLGGWAAVVNVGTNSTWLGSHLAMSNLYAYGRLAWEPTLDSEDIVQDWIRLTFGLDRRIVDTLTQMSMESWPAYENYSGNLGIQTLTDILYTHYGPNPASQDGNGWGQWTRADHLSIGMDRTVKNGTKFSGQYPAEVAAMYENIETTPDNLLLWFHHVNYTQRLHSGKTVIQHFYDAHYTGAETAQTFVSQWESLRERIDAERYQHVLTRLIYQAGHSIVWRDAINNFYHNLSGIADEKQRVGHHPWRVEAEDMQLDGYVPYAVSPFETASNYTAIVTASNGTTGTASATLDFKTGTYDLGINYYDMYGGKSHWTVYLNDRVVGQWQGNSEDVLSHTPSIYLDGHSATRITFRDVKIHKGDRLKIVGKPDGVEPAPLDYVVVLPPGIVD</sequence>
<name>AGUA_ASPFC</name>
<reference key="1">
    <citation type="journal article" date="2008" name="PLoS Genet.">
        <title>Genomic islands in the pathogenic filamentous fungus Aspergillus fumigatus.</title>
        <authorList>
            <person name="Fedorova N.D."/>
            <person name="Khaldi N."/>
            <person name="Joardar V.S."/>
            <person name="Maiti R."/>
            <person name="Amedeo P."/>
            <person name="Anderson M.J."/>
            <person name="Crabtree J."/>
            <person name="Silva J.C."/>
            <person name="Badger J.H."/>
            <person name="Albarraq A."/>
            <person name="Angiuoli S."/>
            <person name="Bussey H."/>
            <person name="Bowyer P."/>
            <person name="Cotty P.J."/>
            <person name="Dyer P.S."/>
            <person name="Egan A."/>
            <person name="Galens K."/>
            <person name="Fraser-Liggett C.M."/>
            <person name="Haas B.J."/>
            <person name="Inman J.M."/>
            <person name="Kent R."/>
            <person name="Lemieux S."/>
            <person name="Malavazi I."/>
            <person name="Orvis J."/>
            <person name="Roemer T."/>
            <person name="Ronning C.M."/>
            <person name="Sundaram J.P."/>
            <person name="Sutton G."/>
            <person name="Turner G."/>
            <person name="Venter J.C."/>
            <person name="White O.R."/>
            <person name="Whitty B.R."/>
            <person name="Youngman P."/>
            <person name="Wolfe K.H."/>
            <person name="Goldman G.H."/>
            <person name="Wortman J.R."/>
            <person name="Jiang B."/>
            <person name="Denning D.W."/>
            <person name="Nierman W.C."/>
        </authorList>
    </citation>
    <scope>NUCLEOTIDE SEQUENCE [LARGE SCALE GENOMIC DNA]</scope>
    <source>
        <strain>CBS 144.89 / FGSC A1163 / CEA10</strain>
    </source>
</reference>
<proteinExistence type="inferred from homology"/>
<comment type="function">
    <text evidence="1">Alpha-glucuronidase involved in the hydrolysis of xylan, a major structural heterogeneous polysaccharide found in plant biomass representing the second most abundant polysaccharide in the biosphere, after cellulose. Releases 4-O-methylglucuronic acid from xylan (By similarity).</text>
</comment>
<comment type="catalytic activity">
    <reaction>
        <text>an alpha-D-glucuronoside + H2O = D-glucuronate + an alcohol</text>
        <dbReference type="Rhea" id="RHEA:20005"/>
        <dbReference type="ChEBI" id="CHEBI:15377"/>
        <dbReference type="ChEBI" id="CHEBI:30879"/>
        <dbReference type="ChEBI" id="CHEBI:58720"/>
        <dbReference type="ChEBI" id="CHEBI:58899"/>
        <dbReference type="EC" id="3.2.1.139"/>
    </reaction>
</comment>
<comment type="subcellular location">
    <subcellularLocation>
        <location evidence="1">Secreted</location>
    </subcellularLocation>
</comment>
<comment type="similarity">
    <text evidence="3">Belongs to the glycosyl hydrolase 67 family.</text>
</comment>